<sequence>MAGEIPDFQAEVRTGTGKGAARQARREGYVPGIVYGGGQEPLSINVPYNDLLNRLKKGRFLQTLFNLKVEGQEDVRVICRGVQRDVVKDLPTHVDFMRLRRTSRVNLFIHVTFENHDKAPGLKRGGTLTVVRPEVELEVTAGDIPDHLTVDLTDRQIGDVIHINDIKLPEGAVPTINRNFVIANISAPSGLRSSDNEEEAEEA</sequence>
<comment type="function">
    <text evidence="1">This is one of the proteins that binds to the 5S RNA in the ribosome where it forms part of the central protuberance.</text>
</comment>
<comment type="subunit">
    <text evidence="1">Part of the 50S ribosomal subunit; part of the 5S rRNA/L5/L18/L25 subcomplex. Contacts the 5S rRNA. Binds to the 5S rRNA independently of L5 and L18.</text>
</comment>
<comment type="similarity">
    <text evidence="1">Belongs to the bacterial ribosomal protein bL25 family. CTC subfamily.</text>
</comment>
<name>RL25_CERS4</name>
<gene>
    <name evidence="1" type="primary">rplY</name>
    <name evidence="1" type="synonym">ctc</name>
    <name type="ordered locus">RHOS4_24380</name>
    <name type="ORF">RSP_0827</name>
</gene>
<feature type="chain" id="PRO_0000244234" description="Large ribosomal subunit protein bL25">
    <location>
        <begin position="1"/>
        <end position="203"/>
    </location>
</feature>
<reference key="1">
    <citation type="submission" date="2005-09" db="EMBL/GenBank/DDBJ databases">
        <title>Complete sequence of chromosome 1 of Rhodobacter sphaeroides 2.4.1.</title>
        <authorList>
            <person name="Copeland A."/>
            <person name="Lucas S."/>
            <person name="Lapidus A."/>
            <person name="Barry K."/>
            <person name="Detter J.C."/>
            <person name="Glavina T."/>
            <person name="Hammon N."/>
            <person name="Israni S."/>
            <person name="Pitluck S."/>
            <person name="Richardson P."/>
            <person name="Mackenzie C."/>
            <person name="Choudhary M."/>
            <person name="Larimer F."/>
            <person name="Hauser L.J."/>
            <person name="Land M."/>
            <person name="Donohue T.J."/>
            <person name="Kaplan S."/>
        </authorList>
    </citation>
    <scope>NUCLEOTIDE SEQUENCE [LARGE SCALE GENOMIC DNA]</scope>
    <source>
        <strain>ATCC 17023 / DSM 158 / JCM 6121 / CCUG 31486 / LMG 2827 / NBRC 12203 / NCIMB 8253 / ATH 2.4.1.</strain>
    </source>
</reference>
<keyword id="KW-1185">Reference proteome</keyword>
<keyword id="KW-0687">Ribonucleoprotein</keyword>
<keyword id="KW-0689">Ribosomal protein</keyword>
<keyword id="KW-0694">RNA-binding</keyword>
<keyword id="KW-0699">rRNA-binding</keyword>
<dbReference type="EMBL" id="CP000143">
    <property type="protein sequence ID" value="ABA80006.1"/>
    <property type="molecule type" value="Genomic_DNA"/>
</dbReference>
<dbReference type="RefSeq" id="WP_002721014.1">
    <property type="nucleotide sequence ID" value="NZ_CP030271.1"/>
</dbReference>
<dbReference type="RefSeq" id="YP_353907.1">
    <property type="nucleotide sequence ID" value="NC_007493.2"/>
</dbReference>
<dbReference type="SMR" id="Q3IZM8"/>
<dbReference type="STRING" id="272943.RSP_0827"/>
<dbReference type="EnsemblBacteria" id="ABA80006">
    <property type="protein sequence ID" value="ABA80006"/>
    <property type="gene ID" value="RSP_0827"/>
</dbReference>
<dbReference type="KEGG" id="rsp:RSP_0827"/>
<dbReference type="PATRIC" id="fig|272943.9.peg.2789"/>
<dbReference type="eggNOG" id="COG1825">
    <property type="taxonomic scope" value="Bacteria"/>
</dbReference>
<dbReference type="OrthoDB" id="9806411at2"/>
<dbReference type="PhylomeDB" id="Q3IZM8"/>
<dbReference type="Proteomes" id="UP000002703">
    <property type="component" value="Chromosome 1"/>
</dbReference>
<dbReference type="GO" id="GO:0022625">
    <property type="term" value="C:cytosolic large ribosomal subunit"/>
    <property type="evidence" value="ECO:0007669"/>
    <property type="project" value="TreeGrafter"/>
</dbReference>
<dbReference type="GO" id="GO:0008097">
    <property type="term" value="F:5S rRNA binding"/>
    <property type="evidence" value="ECO:0007669"/>
    <property type="project" value="InterPro"/>
</dbReference>
<dbReference type="GO" id="GO:0003735">
    <property type="term" value="F:structural constituent of ribosome"/>
    <property type="evidence" value="ECO:0007669"/>
    <property type="project" value="InterPro"/>
</dbReference>
<dbReference type="GO" id="GO:0006412">
    <property type="term" value="P:translation"/>
    <property type="evidence" value="ECO:0007669"/>
    <property type="project" value="UniProtKB-UniRule"/>
</dbReference>
<dbReference type="CDD" id="cd00495">
    <property type="entry name" value="Ribosomal_L25_TL5_CTC"/>
    <property type="match status" value="1"/>
</dbReference>
<dbReference type="Gene3D" id="2.170.120.20">
    <property type="entry name" value="Ribosomal protein L25, beta domain"/>
    <property type="match status" value="1"/>
</dbReference>
<dbReference type="Gene3D" id="2.40.240.10">
    <property type="entry name" value="Ribosomal Protein L25, Chain P"/>
    <property type="match status" value="1"/>
</dbReference>
<dbReference type="HAMAP" id="MF_01334">
    <property type="entry name" value="Ribosomal_bL25_CTC"/>
    <property type="match status" value="1"/>
</dbReference>
<dbReference type="InterPro" id="IPR020056">
    <property type="entry name" value="Rbsml_bL25/Gln-tRNA_synth_N"/>
</dbReference>
<dbReference type="InterPro" id="IPR011035">
    <property type="entry name" value="Ribosomal_bL25/Gln-tRNA_synth"/>
</dbReference>
<dbReference type="InterPro" id="IPR020057">
    <property type="entry name" value="Ribosomal_bL25_b-dom"/>
</dbReference>
<dbReference type="InterPro" id="IPR037121">
    <property type="entry name" value="Ribosomal_bL25_C"/>
</dbReference>
<dbReference type="InterPro" id="IPR001021">
    <property type="entry name" value="Ribosomal_bL25_long"/>
</dbReference>
<dbReference type="InterPro" id="IPR029751">
    <property type="entry name" value="Ribosomal_L25_dom"/>
</dbReference>
<dbReference type="InterPro" id="IPR020930">
    <property type="entry name" value="Ribosomal_uL5_bac-type"/>
</dbReference>
<dbReference type="NCBIfam" id="TIGR00731">
    <property type="entry name" value="bL25_bact_ctc"/>
    <property type="match status" value="1"/>
</dbReference>
<dbReference type="NCBIfam" id="NF004128">
    <property type="entry name" value="PRK05618.1-2"/>
    <property type="match status" value="1"/>
</dbReference>
<dbReference type="NCBIfam" id="NF004612">
    <property type="entry name" value="PRK05943.1"/>
    <property type="match status" value="1"/>
</dbReference>
<dbReference type="PANTHER" id="PTHR33284">
    <property type="entry name" value="RIBOSOMAL PROTEIN L25/GLN-TRNA SYNTHETASE, ANTI-CODON-BINDING DOMAIN-CONTAINING PROTEIN"/>
    <property type="match status" value="1"/>
</dbReference>
<dbReference type="PANTHER" id="PTHR33284:SF1">
    <property type="entry name" value="RIBOSOMAL PROTEIN L25_GLN-TRNA SYNTHETASE, ANTI-CODON-BINDING DOMAIN-CONTAINING PROTEIN"/>
    <property type="match status" value="1"/>
</dbReference>
<dbReference type="Pfam" id="PF01386">
    <property type="entry name" value="Ribosomal_L25p"/>
    <property type="match status" value="1"/>
</dbReference>
<dbReference type="Pfam" id="PF14693">
    <property type="entry name" value="Ribosomal_TL5_C"/>
    <property type="match status" value="1"/>
</dbReference>
<dbReference type="SUPFAM" id="SSF50715">
    <property type="entry name" value="Ribosomal protein L25-like"/>
    <property type="match status" value="1"/>
</dbReference>
<organism>
    <name type="scientific">Cereibacter sphaeroides (strain ATCC 17023 / DSM 158 / JCM 6121 / CCUG 31486 / LMG 2827 / NBRC 12203 / NCIMB 8253 / ATH 2.4.1.)</name>
    <name type="common">Rhodobacter sphaeroides</name>
    <dbReference type="NCBI Taxonomy" id="272943"/>
    <lineage>
        <taxon>Bacteria</taxon>
        <taxon>Pseudomonadati</taxon>
        <taxon>Pseudomonadota</taxon>
        <taxon>Alphaproteobacteria</taxon>
        <taxon>Rhodobacterales</taxon>
        <taxon>Paracoccaceae</taxon>
        <taxon>Cereibacter</taxon>
    </lineage>
</organism>
<evidence type="ECO:0000255" key="1">
    <source>
        <dbReference type="HAMAP-Rule" id="MF_01334"/>
    </source>
</evidence>
<evidence type="ECO:0000305" key="2"/>
<proteinExistence type="inferred from homology"/>
<protein>
    <recommendedName>
        <fullName evidence="1">Large ribosomal subunit protein bL25</fullName>
    </recommendedName>
    <alternativeName>
        <fullName evidence="2">50S ribosomal protein L25</fullName>
    </alternativeName>
    <alternativeName>
        <fullName evidence="1">General stress protein CTC</fullName>
    </alternativeName>
</protein>
<accession>Q3IZM8</accession>